<name>RS7_BACLD</name>
<evidence type="ECO:0000255" key="1">
    <source>
        <dbReference type="HAMAP-Rule" id="MF_00480"/>
    </source>
</evidence>
<evidence type="ECO:0000305" key="2"/>
<sequence>MPRKGPVAKRDVLPDPLYNSKLVTRLINKMMIDGKKGKAQTILYKSFDIIKERTGNDAMEVFEQALKNIMPVLEVKARRVGGANYQVPVEVRPERRTTLGLRWLVNYARLRGEKTMEERLANEILDAANNTGAAVKKREDTHKMAEANKAFAHYRW</sequence>
<reference key="1">
    <citation type="journal article" date="2004" name="J. Mol. Microbiol. Biotechnol.">
        <title>The complete genome sequence of Bacillus licheniformis DSM13, an organism with great industrial potential.</title>
        <authorList>
            <person name="Veith B."/>
            <person name="Herzberg C."/>
            <person name="Steckel S."/>
            <person name="Feesche J."/>
            <person name="Maurer K.H."/>
            <person name="Ehrenreich P."/>
            <person name="Baeumer S."/>
            <person name="Henne A."/>
            <person name="Liesegang H."/>
            <person name="Merkl R."/>
            <person name="Ehrenreich A."/>
            <person name="Gottschalk G."/>
        </authorList>
    </citation>
    <scope>NUCLEOTIDE SEQUENCE [LARGE SCALE GENOMIC DNA]</scope>
    <source>
        <strain>ATCC 14580 / DSM 13 / JCM 2505 / CCUG 7422 / NBRC 12200 / NCIMB 9375 / NCTC 10341 / NRRL NRS-1264 / Gibson 46</strain>
    </source>
</reference>
<reference key="2">
    <citation type="journal article" date="2004" name="Genome Biol.">
        <title>Complete genome sequence of the industrial bacterium Bacillus licheniformis and comparisons with closely related Bacillus species.</title>
        <authorList>
            <person name="Rey M.W."/>
            <person name="Ramaiya P."/>
            <person name="Nelson B.A."/>
            <person name="Brody-Karpin S.D."/>
            <person name="Zaretsky E.J."/>
            <person name="Tang M."/>
            <person name="Lopez de Leon A."/>
            <person name="Xiang H."/>
            <person name="Gusti V."/>
            <person name="Clausen I.G."/>
            <person name="Olsen P.B."/>
            <person name="Rasmussen M.D."/>
            <person name="Andersen J.T."/>
            <person name="Joergensen P.L."/>
            <person name="Larsen T.S."/>
            <person name="Sorokin A."/>
            <person name="Bolotin A."/>
            <person name="Lapidus A."/>
            <person name="Galleron N."/>
            <person name="Ehrlich S.D."/>
            <person name="Berka R.M."/>
        </authorList>
    </citation>
    <scope>NUCLEOTIDE SEQUENCE [LARGE SCALE GENOMIC DNA]</scope>
    <source>
        <strain>ATCC 14580 / DSM 13 / JCM 2505 / CCUG 7422 / NBRC 12200 / NCIMB 9375 / NCTC 10341 / NRRL NRS-1264 / Gibson 46</strain>
    </source>
</reference>
<protein>
    <recommendedName>
        <fullName evidence="1">Small ribosomal subunit protein uS7</fullName>
    </recommendedName>
    <alternativeName>
        <fullName evidence="2">30S ribosomal protein S7</fullName>
    </alternativeName>
</protein>
<comment type="function">
    <text evidence="1">One of the primary rRNA binding proteins, it binds directly to 16S rRNA where it nucleates assembly of the head domain of the 30S subunit. Is located at the subunit interface close to the decoding center, probably blocks exit of the E-site tRNA.</text>
</comment>
<comment type="subunit">
    <text evidence="1">Part of the 30S ribosomal subunit. Contacts proteins S9 and S11.</text>
</comment>
<comment type="similarity">
    <text evidence="1">Belongs to the universal ribosomal protein uS7 family.</text>
</comment>
<accession>Q65PB1</accession>
<accession>Q62ZQ0</accession>
<dbReference type="EMBL" id="AE017333">
    <property type="protein sequence ID" value="AAU39103.1"/>
    <property type="molecule type" value="Genomic_DNA"/>
</dbReference>
<dbReference type="EMBL" id="CP000002">
    <property type="protein sequence ID" value="AAU21758.1"/>
    <property type="molecule type" value="Genomic_DNA"/>
</dbReference>
<dbReference type="RefSeq" id="WP_003178317.1">
    <property type="nucleotide sequence ID" value="NC_006322.1"/>
</dbReference>
<dbReference type="SMR" id="Q65PB1"/>
<dbReference type="STRING" id="279010.BL01059"/>
<dbReference type="GeneID" id="92858907"/>
<dbReference type="KEGG" id="bld:BLi00129"/>
<dbReference type="KEGG" id="bli:BL01059"/>
<dbReference type="eggNOG" id="COG0049">
    <property type="taxonomic scope" value="Bacteria"/>
</dbReference>
<dbReference type="HOGENOM" id="CLU_072226_1_1_9"/>
<dbReference type="Proteomes" id="UP000000606">
    <property type="component" value="Chromosome"/>
</dbReference>
<dbReference type="GO" id="GO:0015935">
    <property type="term" value="C:small ribosomal subunit"/>
    <property type="evidence" value="ECO:0007669"/>
    <property type="project" value="InterPro"/>
</dbReference>
<dbReference type="GO" id="GO:0019843">
    <property type="term" value="F:rRNA binding"/>
    <property type="evidence" value="ECO:0007669"/>
    <property type="project" value="UniProtKB-UniRule"/>
</dbReference>
<dbReference type="GO" id="GO:0003735">
    <property type="term" value="F:structural constituent of ribosome"/>
    <property type="evidence" value="ECO:0007669"/>
    <property type="project" value="InterPro"/>
</dbReference>
<dbReference type="GO" id="GO:0000049">
    <property type="term" value="F:tRNA binding"/>
    <property type="evidence" value="ECO:0007669"/>
    <property type="project" value="UniProtKB-UniRule"/>
</dbReference>
<dbReference type="GO" id="GO:0006412">
    <property type="term" value="P:translation"/>
    <property type="evidence" value="ECO:0007669"/>
    <property type="project" value="UniProtKB-UniRule"/>
</dbReference>
<dbReference type="CDD" id="cd14869">
    <property type="entry name" value="uS7_Bacteria"/>
    <property type="match status" value="1"/>
</dbReference>
<dbReference type="FunFam" id="1.10.455.10:FF:000001">
    <property type="entry name" value="30S ribosomal protein S7"/>
    <property type="match status" value="1"/>
</dbReference>
<dbReference type="Gene3D" id="1.10.455.10">
    <property type="entry name" value="Ribosomal protein S7 domain"/>
    <property type="match status" value="1"/>
</dbReference>
<dbReference type="HAMAP" id="MF_00480_B">
    <property type="entry name" value="Ribosomal_uS7_B"/>
    <property type="match status" value="1"/>
</dbReference>
<dbReference type="InterPro" id="IPR000235">
    <property type="entry name" value="Ribosomal_uS7"/>
</dbReference>
<dbReference type="InterPro" id="IPR005717">
    <property type="entry name" value="Ribosomal_uS7_bac/org-type"/>
</dbReference>
<dbReference type="InterPro" id="IPR020606">
    <property type="entry name" value="Ribosomal_uS7_CS"/>
</dbReference>
<dbReference type="InterPro" id="IPR023798">
    <property type="entry name" value="Ribosomal_uS7_dom"/>
</dbReference>
<dbReference type="InterPro" id="IPR036823">
    <property type="entry name" value="Ribosomal_uS7_dom_sf"/>
</dbReference>
<dbReference type="NCBIfam" id="TIGR01029">
    <property type="entry name" value="rpsG_bact"/>
    <property type="match status" value="1"/>
</dbReference>
<dbReference type="PANTHER" id="PTHR11205">
    <property type="entry name" value="RIBOSOMAL PROTEIN S7"/>
    <property type="match status" value="1"/>
</dbReference>
<dbReference type="Pfam" id="PF00177">
    <property type="entry name" value="Ribosomal_S7"/>
    <property type="match status" value="1"/>
</dbReference>
<dbReference type="PIRSF" id="PIRSF002122">
    <property type="entry name" value="RPS7p_RPS7a_RPS5e_RPS7o"/>
    <property type="match status" value="1"/>
</dbReference>
<dbReference type="SUPFAM" id="SSF47973">
    <property type="entry name" value="Ribosomal protein S7"/>
    <property type="match status" value="1"/>
</dbReference>
<dbReference type="PROSITE" id="PS00052">
    <property type="entry name" value="RIBOSOMAL_S7"/>
    <property type="match status" value="1"/>
</dbReference>
<organism>
    <name type="scientific">Bacillus licheniformis (strain ATCC 14580 / DSM 13 / JCM 2505 / CCUG 7422 / NBRC 12200 / NCIMB 9375 / NCTC 10341 / NRRL NRS-1264 / Gibson 46)</name>
    <dbReference type="NCBI Taxonomy" id="279010"/>
    <lineage>
        <taxon>Bacteria</taxon>
        <taxon>Bacillati</taxon>
        <taxon>Bacillota</taxon>
        <taxon>Bacilli</taxon>
        <taxon>Bacillales</taxon>
        <taxon>Bacillaceae</taxon>
        <taxon>Bacillus</taxon>
    </lineage>
</organism>
<feature type="chain" id="PRO_0000226481" description="Small ribosomal subunit protein uS7">
    <location>
        <begin position="1"/>
        <end position="156"/>
    </location>
</feature>
<gene>
    <name evidence="1" type="primary">rpsG</name>
    <name type="ordered locus">BLi00129</name>
    <name type="ordered locus">BL01059</name>
</gene>
<keyword id="KW-1185">Reference proteome</keyword>
<keyword id="KW-0687">Ribonucleoprotein</keyword>
<keyword id="KW-0689">Ribosomal protein</keyword>
<keyword id="KW-0694">RNA-binding</keyword>
<keyword id="KW-0699">rRNA-binding</keyword>
<keyword id="KW-0820">tRNA-binding</keyword>
<proteinExistence type="inferred from homology"/>